<proteinExistence type="inferred from homology"/>
<name>PSTB2_VIBVY</name>
<gene>
    <name evidence="1" type="primary">pstB2</name>
    <name type="ordered locus">VVA0372</name>
</gene>
<protein>
    <recommendedName>
        <fullName evidence="1">Phosphate import ATP-binding protein PstB 2</fullName>
        <ecNumber evidence="1">7.3.2.1</ecNumber>
    </recommendedName>
    <alternativeName>
        <fullName evidence="1">ABC phosphate transporter 2</fullName>
    </alternativeName>
    <alternativeName>
        <fullName evidence="1">Phosphate-transporting ATPase 2</fullName>
    </alternativeName>
</protein>
<keyword id="KW-0067">ATP-binding</keyword>
<keyword id="KW-0997">Cell inner membrane</keyword>
<keyword id="KW-1003">Cell membrane</keyword>
<keyword id="KW-0472">Membrane</keyword>
<keyword id="KW-0547">Nucleotide-binding</keyword>
<keyword id="KW-0592">Phosphate transport</keyword>
<keyword id="KW-1278">Translocase</keyword>
<keyword id="KW-0813">Transport</keyword>
<organism>
    <name type="scientific">Vibrio vulnificus (strain YJ016)</name>
    <dbReference type="NCBI Taxonomy" id="196600"/>
    <lineage>
        <taxon>Bacteria</taxon>
        <taxon>Pseudomonadati</taxon>
        <taxon>Pseudomonadota</taxon>
        <taxon>Gammaproteobacteria</taxon>
        <taxon>Vibrionales</taxon>
        <taxon>Vibrionaceae</taxon>
        <taxon>Vibrio</taxon>
    </lineage>
</organism>
<feature type="chain" id="PRO_0000092932" description="Phosphate import ATP-binding protein PstB 2">
    <location>
        <begin position="1"/>
        <end position="279"/>
    </location>
</feature>
<feature type="domain" description="ABC transporter" evidence="1">
    <location>
        <begin position="34"/>
        <end position="274"/>
    </location>
</feature>
<feature type="binding site" evidence="1">
    <location>
        <begin position="66"/>
        <end position="73"/>
    </location>
    <ligand>
        <name>ATP</name>
        <dbReference type="ChEBI" id="CHEBI:30616"/>
    </ligand>
</feature>
<comment type="function">
    <text evidence="1">Part of the ABC transporter complex PstSACB involved in phosphate import. Responsible for energy coupling to the transport system.</text>
</comment>
<comment type="catalytic activity">
    <reaction evidence="1">
        <text>phosphate(out) + ATP + H2O = ADP + 2 phosphate(in) + H(+)</text>
        <dbReference type="Rhea" id="RHEA:24440"/>
        <dbReference type="ChEBI" id="CHEBI:15377"/>
        <dbReference type="ChEBI" id="CHEBI:15378"/>
        <dbReference type="ChEBI" id="CHEBI:30616"/>
        <dbReference type="ChEBI" id="CHEBI:43474"/>
        <dbReference type="ChEBI" id="CHEBI:456216"/>
        <dbReference type="EC" id="7.3.2.1"/>
    </reaction>
</comment>
<comment type="subunit">
    <text evidence="1">The complex is composed of two ATP-binding proteins (PstB), two transmembrane proteins (PstC and PstA) and a solute-binding protein (PstS).</text>
</comment>
<comment type="subcellular location">
    <subcellularLocation>
        <location evidence="1">Cell inner membrane</location>
        <topology evidence="1">Peripheral membrane protein</topology>
    </subcellularLocation>
</comment>
<comment type="similarity">
    <text evidence="1">Belongs to the ABC transporter superfamily. Phosphate importer (TC 3.A.1.7) family.</text>
</comment>
<accession>Q7MFE8</accession>
<dbReference type="EC" id="7.3.2.1" evidence="1"/>
<dbReference type="EMBL" id="BA000038">
    <property type="protein sequence ID" value="BAC96398.1"/>
    <property type="molecule type" value="Genomic_DNA"/>
</dbReference>
<dbReference type="SMR" id="Q7MFE8"/>
<dbReference type="STRING" id="672.VV93_v1c33590"/>
<dbReference type="KEGG" id="vvy:VVA0372"/>
<dbReference type="eggNOG" id="COG1117">
    <property type="taxonomic scope" value="Bacteria"/>
</dbReference>
<dbReference type="HOGENOM" id="CLU_000604_1_22_6"/>
<dbReference type="Proteomes" id="UP000002675">
    <property type="component" value="Chromosome II"/>
</dbReference>
<dbReference type="GO" id="GO:0005886">
    <property type="term" value="C:plasma membrane"/>
    <property type="evidence" value="ECO:0007669"/>
    <property type="project" value="UniProtKB-SubCell"/>
</dbReference>
<dbReference type="GO" id="GO:0005524">
    <property type="term" value="F:ATP binding"/>
    <property type="evidence" value="ECO:0007669"/>
    <property type="project" value="UniProtKB-KW"/>
</dbReference>
<dbReference type="GO" id="GO:0016887">
    <property type="term" value="F:ATP hydrolysis activity"/>
    <property type="evidence" value="ECO:0007669"/>
    <property type="project" value="InterPro"/>
</dbReference>
<dbReference type="GO" id="GO:0015415">
    <property type="term" value="F:ATPase-coupled phosphate ion transmembrane transporter activity"/>
    <property type="evidence" value="ECO:0007669"/>
    <property type="project" value="UniProtKB-EC"/>
</dbReference>
<dbReference type="GO" id="GO:0035435">
    <property type="term" value="P:phosphate ion transmembrane transport"/>
    <property type="evidence" value="ECO:0007669"/>
    <property type="project" value="InterPro"/>
</dbReference>
<dbReference type="CDD" id="cd03260">
    <property type="entry name" value="ABC_PstB_phosphate_transporter"/>
    <property type="match status" value="1"/>
</dbReference>
<dbReference type="FunFam" id="3.40.50.300:FF:000132">
    <property type="entry name" value="Phosphate import ATP-binding protein PstB"/>
    <property type="match status" value="1"/>
</dbReference>
<dbReference type="Gene3D" id="3.40.50.300">
    <property type="entry name" value="P-loop containing nucleotide triphosphate hydrolases"/>
    <property type="match status" value="1"/>
</dbReference>
<dbReference type="InterPro" id="IPR003593">
    <property type="entry name" value="AAA+_ATPase"/>
</dbReference>
<dbReference type="InterPro" id="IPR003439">
    <property type="entry name" value="ABC_transporter-like_ATP-bd"/>
</dbReference>
<dbReference type="InterPro" id="IPR017871">
    <property type="entry name" value="ABC_transporter-like_CS"/>
</dbReference>
<dbReference type="InterPro" id="IPR027417">
    <property type="entry name" value="P-loop_NTPase"/>
</dbReference>
<dbReference type="InterPro" id="IPR005670">
    <property type="entry name" value="PstB-like"/>
</dbReference>
<dbReference type="NCBIfam" id="TIGR00972">
    <property type="entry name" value="3a0107s01c2"/>
    <property type="match status" value="1"/>
</dbReference>
<dbReference type="PANTHER" id="PTHR43423">
    <property type="entry name" value="ABC TRANSPORTER I FAMILY MEMBER 17"/>
    <property type="match status" value="1"/>
</dbReference>
<dbReference type="PANTHER" id="PTHR43423:SF1">
    <property type="entry name" value="ABC TRANSPORTER I FAMILY MEMBER 17"/>
    <property type="match status" value="1"/>
</dbReference>
<dbReference type="Pfam" id="PF00005">
    <property type="entry name" value="ABC_tran"/>
    <property type="match status" value="1"/>
</dbReference>
<dbReference type="SMART" id="SM00382">
    <property type="entry name" value="AAA"/>
    <property type="match status" value="1"/>
</dbReference>
<dbReference type="SUPFAM" id="SSF52540">
    <property type="entry name" value="P-loop containing nucleoside triphosphate hydrolases"/>
    <property type="match status" value="1"/>
</dbReference>
<dbReference type="PROSITE" id="PS00211">
    <property type="entry name" value="ABC_TRANSPORTER_1"/>
    <property type="match status" value="1"/>
</dbReference>
<dbReference type="PROSITE" id="PS50893">
    <property type="entry name" value="ABC_TRANSPORTER_2"/>
    <property type="match status" value="1"/>
</dbReference>
<dbReference type="PROSITE" id="PS51238">
    <property type="entry name" value="PSTB"/>
    <property type="match status" value="1"/>
</dbReference>
<evidence type="ECO:0000255" key="1">
    <source>
        <dbReference type="HAMAP-Rule" id="MF_01702"/>
    </source>
</evidence>
<sequence length="279" mass="31496">MQNVLTQRLTNDEQQKTLKTLIEKNLEIKTMNKFDIENLDLYYGENQALKAINLPIPVRQVTALIGPSGCGKSTLLRCLNRMNDLIEGVKITGKLAMDGEDIYGNVDVADLRIKVGMVFQKPNPFPMSIYENVAYGLRAQGIKDKKHIDEVVERSLRGAALWDEVKDRLKSHAFGLSGGQQQRLCIARTIAMEPDVILMDEPTSALDPIATHKIEELMEELKKNYTIVIVTHSMQQARRISDRTAFFLMGELVEHNDTQVIFSEPSDDRTRGYVNGDFG</sequence>
<reference key="1">
    <citation type="journal article" date="2003" name="Genome Res.">
        <title>Comparative genome analysis of Vibrio vulnificus, a marine pathogen.</title>
        <authorList>
            <person name="Chen C.-Y."/>
            <person name="Wu K.-M."/>
            <person name="Chang Y.-C."/>
            <person name="Chang C.-H."/>
            <person name="Tsai H.-C."/>
            <person name="Liao T.-L."/>
            <person name="Liu Y.-M."/>
            <person name="Chen H.-J."/>
            <person name="Shen A.B.-T."/>
            <person name="Li J.-C."/>
            <person name="Su T.-L."/>
            <person name="Shao C.-P."/>
            <person name="Lee C.-T."/>
            <person name="Hor L.-I."/>
            <person name="Tsai S.-F."/>
        </authorList>
    </citation>
    <scope>NUCLEOTIDE SEQUENCE [LARGE SCALE GENOMIC DNA]</scope>
    <source>
        <strain>YJ016</strain>
    </source>
</reference>